<keyword id="KW-0659">Purine metabolism</keyword>
<keyword id="KW-1185">Reference proteome</keyword>
<sequence>MRSPYLIGVFLAAGKSRRMGQNKLALPLKGENIGSLSLKTALSSRLDHVLVVERTEHASLEWIGAPYHAPPFQKRWSLHVCQDAEKGQGHSVSSGVRKAESMGADGIVILLADQPQLSVDHLNALVALAPESFAVSSFLGAFTPPIYFSSTCFPYVKGLKGDEGARRLLKSGQLGAGAVLEAKDSGELDDIDTPEEYDMVRRAMS</sequence>
<organism>
    <name type="scientific">Bacillus subtilis (strain 168)</name>
    <dbReference type="NCBI Taxonomy" id="224308"/>
    <lineage>
        <taxon>Bacteria</taxon>
        <taxon>Bacillati</taxon>
        <taxon>Bacillota</taxon>
        <taxon>Bacilli</taxon>
        <taxon>Bacillales</taxon>
        <taxon>Bacillaceae</taxon>
        <taxon>Bacillus</taxon>
    </lineage>
</organism>
<evidence type="ECO:0000269" key="1">
    <source>
    </source>
</evidence>
<reference key="1">
    <citation type="journal article" date="1997" name="Nature">
        <title>The complete genome sequence of the Gram-positive bacterium Bacillus subtilis.</title>
        <authorList>
            <person name="Kunst F."/>
            <person name="Ogasawara N."/>
            <person name="Moszer I."/>
            <person name="Albertini A.M."/>
            <person name="Alloni G."/>
            <person name="Azevedo V."/>
            <person name="Bertero M.G."/>
            <person name="Bessieres P."/>
            <person name="Bolotin A."/>
            <person name="Borchert S."/>
            <person name="Borriss R."/>
            <person name="Boursier L."/>
            <person name="Brans A."/>
            <person name="Braun M."/>
            <person name="Brignell S.C."/>
            <person name="Bron S."/>
            <person name="Brouillet S."/>
            <person name="Bruschi C.V."/>
            <person name="Caldwell B."/>
            <person name="Capuano V."/>
            <person name="Carter N.M."/>
            <person name="Choi S.-K."/>
            <person name="Codani J.-J."/>
            <person name="Connerton I.F."/>
            <person name="Cummings N.J."/>
            <person name="Daniel R.A."/>
            <person name="Denizot F."/>
            <person name="Devine K.M."/>
            <person name="Duesterhoeft A."/>
            <person name="Ehrlich S.D."/>
            <person name="Emmerson P.T."/>
            <person name="Entian K.-D."/>
            <person name="Errington J."/>
            <person name="Fabret C."/>
            <person name="Ferrari E."/>
            <person name="Foulger D."/>
            <person name="Fritz C."/>
            <person name="Fujita M."/>
            <person name="Fujita Y."/>
            <person name="Fuma S."/>
            <person name="Galizzi A."/>
            <person name="Galleron N."/>
            <person name="Ghim S.-Y."/>
            <person name="Glaser P."/>
            <person name="Goffeau A."/>
            <person name="Golightly E.J."/>
            <person name="Grandi G."/>
            <person name="Guiseppi G."/>
            <person name="Guy B.J."/>
            <person name="Haga K."/>
            <person name="Haiech J."/>
            <person name="Harwood C.R."/>
            <person name="Henaut A."/>
            <person name="Hilbert H."/>
            <person name="Holsappel S."/>
            <person name="Hosono S."/>
            <person name="Hullo M.-F."/>
            <person name="Itaya M."/>
            <person name="Jones L.-M."/>
            <person name="Joris B."/>
            <person name="Karamata D."/>
            <person name="Kasahara Y."/>
            <person name="Klaerr-Blanchard M."/>
            <person name="Klein C."/>
            <person name="Kobayashi Y."/>
            <person name="Koetter P."/>
            <person name="Koningstein G."/>
            <person name="Krogh S."/>
            <person name="Kumano M."/>
            <person name="Kurita K."/>
            <person name="Lapidus A."/>
            <person name="Lardinois S."/>
            <person name="Lauber J."/>
            <person name="Lazarevic V."/>
            <person name="Lee S.-M."/>
            <person name="Levine A."/>
            <person name="Liu H."/>
            <person name="Masuda S."/>
            <person name="Mauel C."/>
            <person name="Medigue C."/>
            <person name="Medina N."/>
            <person name="Mellado R.P."/>
            <person name="Mizuno M."/>
            <person name="Moestl D."/>
            <person name="Nakai S."/>
            <person name="Noback M."/>
            <person name="Noone D."/>
            <person name="O'Reilly M."/>
            <person name="Ogawa K."/>
            <person name="Ogiwara A."/>
            <person name="Oudega B."/>
            <person name="Park S.-H."/>
            <person name="Parro V."/>
            <person name="Pohl T.M."/>
            <person name="Portetelle D."/>
            <person name="Porwollik S."/>
            <person name="Prescott A.M."/>
            <person name="Presecan E."/>
            <person name="Pujic P."/>
            <person name="Purnelle B."/>
            <person name="Rapoport G."/>
            <person name="Rey M."/>
            <person name="Reynolds S."/>
            <person name="Rieger M."/>
            <person name="Rivolta C."/>
            <person name="Rocha E."/>
            <person name="Roche B."/>
            <person name="Rose M."/>
            <person name="Sadaie Y."/>
            <person name="Sato T."/>
            <person name="Scanlan E."/>
            <person name="Schleich S."/>
            <person name="Schroeter R."/>
            <person name="Scoffone F."/>
            <person name="Sekiguchi J."/>
            <person name="Sekowska A."/>
            <person name="Seror S.J."/>
            <person name="Serror P."/>
            <person name="Shin B.-S."/>
            <person name="Soldo B."/>
            <person name="Sorokin A."/>
            <person name="Tacconi E."/>
            <person name="Takagi T."/>
            <person name="Takahashi H."/>
            <person name="Takemaru K."/>
            <person name="Takeuchi M."/>
            <person name="Tamakoshi A."/>
            <person name="Tanaka T."/>
            <person name="Terpstra P."/>
            <person name="Tognoni A."/>
            <person name="Tosato V."/>
            <person name="Uchiyama S."/>
            <person name="Vandenbol M."/>
            <person name="Vannier F."/>
            <person name="Vassarotti A."/>
            <person name="Viari A."/>
            <person name="Wambutt R."/>
            <person name="Wedler E."/>
            <person name="Wedler H."/>
            <person name="Weitzenegger T."/>
            <person name="Winters P."/>
            <person name="Wipat A."/>
            <person name="Yamamoto H."/>
            <person name="Yamane K."/>
            <person name="Yasumoto K."/>
            <person name="Yata K."/>
            <person name="Yoshida K."/>
            <person name="Yoshikawa H.-F."/>
            <person name="Zumstein E."/>
            <person name="Yoshikawa H."/>
            <person name="Danchin A."/>
        </authorList>
    </citation>
    <scope>NUCLEOTIDE SEQUENCE [LARGE SCALE GENOMIC DNA]</scope>
    <source>
        <strain>168</strain>
    </source>
</reference>
<reference key="2">
    <citation type="journal article" date="2009" name="Microbiology">
        <title>From a consortium sequence to a unified sequence: the Bacillus subtilis 168 reference genome a decade later.</title>
        <authorList>
            <person name="Barbe V."/>
            <person name="Cruveiller S."/>
            <person name="Kunst F."/>
            <person name="Lenoble P."/>
            <person name="Meurice G."/>
            <person name="Sekowska A."/>
            <person name="Vallenet D."/>
            <person name="Wang T."/>
            <person name="Moszer I."/>
            <person name="Medigue C."/>
            <person name="Danchin A."/>
        </authorList>
    </citation>
    <scope>SEQUENCE REVISION TO C-TERMINUS</scope>
</reference>
<reference key="3">
    <citation type="journal article" date="2001" name="J. Bacteriol.">
        <title>Functional analysis of 14 genes that constitute the purine catabolic pathway in Bacillus subtilis and evidence for a novel regulon controlled by the PucR transcription activator.</title>
        <authorList>
            <person name="Schultz A.C."/>
            <person name="Nygaard P."/>
            <person name="Saxild H.H."/>
        </authorList>
    </citation>
    <scope>FUNCTION</scope>
    <source>
        <strain>168</strain>
    </source>
</reference>
<dbReference type="EMBL" id="AL009126">
    <property type="protein sequence ID" value="CAB15240.2"/>
    <property type="molecule type" value="Genomic_DNA"/>
</dbReference>
<dbReference type="PIR" id="D70017">
    <property type="entry name" value="D70017"/>
</dbReference>
<dbReference type="RefSeq" id="NP_391130.2">
    <property type="nucleotide sequence ID" value="NC_000964.3"/>
</dbReference>
<dbReference type="RefSeq" id="WP_003228645.1">
    <property type="nucleotide sequence ID" value="NZ_OZ025638.1"/>
</dbReference>
<dbReference type="SMR" id="O32146"/>
<dbReference type="FunCoup" id="O32146">
    <property type="interactions" value="131"/>
</dbReference>
<dbReference type="STRING" id="224308.BSU32500"/>
<dbReference type="PaxDb" id="224308-BSU32500"/>
<dbReference type="EnsemblBacteria" id="CAB15240">
    <property type="protein sequence ID" value="CAB15240"/>
    <property type="gene ID" value="BSU_32500"/>
</dbReference>
<dbReference type="GeneID" id="936486"/>
<dbReference type="KEGG" id="bsu:BSU32500"/>
<dbReference type="PATRIC" id="fig|224308.179.peg.3519"/>
<dbReference type="eggNOG" id="COG2068">
    <property type="taxonomic scope" value="Bacteria"/>
</dbReference>
<dbReference type="InParanoid" id="O32146"/>
<dbReference type="OrthoDB" id="285216at2"/>
<dbReference type="PhylomeDB" id="O32146"/>
<dbReference type="BioCyc" id="BSUB:BSU32500-MONOMER"/>
<dbReference type="UniPathway" id="UPA00604"/>
<dbReference type="Proteomes" id="UP000001570">
    <property type="component" value="Chromosome"/>
</dbReference>
<dbReference type="GO" id="GO:0016779">
    <property type="term" value="F:nucleotidyltransferase activity"/>
    <property type="evidence" value="ECO:0007669"/>
    <property type="project" value="UniProtKB-ARBA"/>
</dbReference>
<dbReference type="GO" id="GO:0009114">
    <property type="term" value="P:hypoxanthine catabolic process"/>
    <property type="evidence" value="ECO:0007669"/>
    <property type="project" value="UniProtKB-UniPathway"/>
</dbReference>
<dbReference type="CDD" id="cd04182">
    <property type="entry name" value="GT_2_like_f"/>
    <property type="match status" value="1"/>
</dbReference>
<dbReference type="Gene3D" id="3.90.550.10">
    <property type="entry name" value="Spore Coat Polysaccharide Biosynthesis Protein SpsA, Chain A"/>
    <property type="match status" value="1"/>
</dbReference>
<dbReference type="InterPro" id="IPR025877">
    <property type="entry name" value="MobA-like_NTP_Trfase"/>
</dbReference>
<dbReference type="InterPro" id="IPR029044">
    <property type="entry name" value="Nucleotide-diphossugar_trans"/>
</dbReference>
<dbReference type="InterPro" id="IPR017615">
    <property type="entry name" value="Xanthine_dehydrogenase_PucB"/>
</dbReference>
<dbReference type="NCBIfam" id="TIGR03202">
    <property type="entry name" value="pucB"/>
    <property type="match status" value="1"/>
</dbReference>
<dbReference type="PANTHER" id="PTHR43777">
    <property type="entry name" value="MOLYBDENUM COFACTOR CYTIDYLYLTRANSFERASE"/>
    <property type="match status" value="1"/>
</dbReference>
<dbReference type="PANTHER" id="PTHR43777:SF1">
    <property type="entry name" value="MOLYBDENUM COFACTOR CYTIDYLYLTRANSFERASE"/>
    <property type="match status" value="1"/>
</dbReference>
<dbReference type="Pfam" id="PF12804">
    <property type="entry name" value="NTP_transf_3"/>
    <property type="match status" value="1"/>
</dbReference>
<dbReference type="SUPFAM" id="SSF53448">
    <property type="entry name" value="Nucleotide-diphospho-sugar transferases"/>
    <property type="match status" value="1"/>
</dbReference>
<name>PUCB_BACSU</name>
<protein>
    <recommendedName>
        <fullName>Purine catabolism protein PucB</fullName>
    </recommendedName>
</protein>
<gene>
    <name type="primary">pucB</name>
    <name type="synonym">yurE</name>
    <name type="ordered locus">BSU32500</name>
</gene>
<accession>O32146</accession>
<proteinExistence type="evidence at transcript level"/>
<comment type="function">
    <text evidence="1">Required for xanthine dehydrogenase activity. Could be involved in formation of the molybdenum cofactor required by xanthine dehydrogenase.</text>
</comment>
<comment type="pathway">
    <text>Purine metabolism; hypoxanthine degradation.</text>
</comment>
<comment type="induction">
    <text>Expression is very low in excess nitrogen (glutamate plus ammonia) and is induced during limiting-nitrogen conditions (glutamate). Expression decreases when allantoin is added during limiting-nitrogen conditions.</text>
</comment>
<feature type="chain" id="PRO_0000097098" description="Purine catabolism protein PucB">
    <location>
        <begin position="1"/>
        <end position="205"/>
    </location>
</feature>